<keyword id="KW-0378">Hydrolase</keyword>
<keyword id="KW-0464">Manganese</keyword>
<keyword id="KW-1185">Reference proteome</keyword>
<gene>
    <name evidence="1" type="primary">ade</name>
    <name type="ordered locus">TM1040_2799</name>
</gene>
<accession>Q1GCT5</accession>
<sequence length="601" mass="63889">MTHKTFPSWPDVAPQLIETAAGRSPADTVIRNGKWVNVHTREVLEGHDIAIKAGRIAYVGPDASYCTGPETEVIDAEGRYMMPGLCDGHMHIESGMLTPAEFARAVIPHGTTTMFTDPHEIANVLGLEGVRLMHDEALLQPVNIYTQMPSCAPSAPGLETTGYEISAEDVAEAMTWPGIIGLGEMMNFPGVAHGDPKMLAEIAATQRSGKTVGGHYASPDLGPDFAAYVAGGPADDHEGTCEADAITRMRQGMRAMVRLGSAWYDVEAQITAITEKGLDPRNFILCTDDCHSGTLVNEGHMNRAVRHAIDCGCDPLIAIQMATINTATHFGLEREIGSITPGRRADIILTSDLKTLPIEVVIARGQIVAESGSIKVECPHLDWPESARGTVHLGHTLAATDFELAAPEGANAVTANVIGVVENQAPTKALKAELPVRDGLVEGEGDVCQIALVERHRATGGVTNAFVSGFGYEGKMAMASTVAHDSHHMIVVGTDRTQMALAANRLAEVGGGITIFRDGAELALVELPIAGLMSDSPASEVAANAQKLVEAMQACGCTLNNAYMQHSLLALVVIPELRISDLGLVDVRSFKKIPVIEPFNE</sequence>
<proteinExistence type="inferred from homology"/>
<organism>
    <name type="scientific">Ruegeria sp. (strain TM1040)</name>
    <name type="common">Silicibacter sp.</name>
    <dbReference type="NCBI Taxonomy" id="292414"/>
    <lineage>
        <taxon>Bacteria</taxon>
        <taxon>Pseudomonadati</taxon>
        <taxon>Pseudomonadota</taxon>
        <taxon>Alphaproteobacteria</taxon>
        <taxon>Rhodobacterales</taxon>
        <taxon>Roseobacteraceae</taxon>
        <taxon>Ruegeria</taxon>
    </lineage>
</organism>
<reference key="1">
    <citation type="submission" date="2006-05" db="EMBL/GenBank/DDBJ databases">
        <title>Complete sequence of chromosome of Silicibacter sp. TM1040.</title>
        <authorList>
            <consortium name="US DOE Joint Genome Institute"/>
            <person name="Copeland A."/>
            <person name="Lucas S."/>
            <person name="Lapidus A."/>
            <person name="Barry K."/>
            <person name="Detter J.C."/>
            <person name="Glavina del Rio T."/>
            <person name="Hammon N."/>
            <person name="Israni S."/>
            <person name="Dalin E."/>
            <person name="Tice H."/>
            <person name="Pitluck S."/>
            <person name="Brettin T."/>
            <person name="Bruce D."/>
            <person name="Han C."/>
            <person name="Tapia R."/>
            <person name="Goodwin L."/>
            <person name="Thompson L.S."/>
            <person name="Gilna P."/>
            <person name="Schmutz J."/>
            <person name="Larimer F."/>
            <person name="Land M."/>
            <person name="Hauser L."/>
            <person name="Kyrpides N."/>
            <person name="Kim E."/>
            <person name="Belas R."/>
            <person name="Moran M.A."/>
            <person name="Buchan A."/>
            <person name="Gonzalez J.M."/>
            <person name="Schell M.A."/>
            <person name="Sun F."/>
            <person name="Richardson P."/>
        </authorList>
    </citation>
    <scope>NUCLEOTIDE SEQUENCE [LARGE SCALE GENOMIC DNA]</scope>
    <source>
        <strain>TM1040</strain>
    </source>
</reference>
<dbReference type="EC" id="3.5.4.2" evidence="1"/>
<dbReference type="EMBL" id="CP000377">
    <property type="protein sequence ID" value="ABF65531.1"/>
    <property type="molecule type" value="Genomic_DNA"/>
</dbReference>
<dbReference type="RefSeq" id="WP_011540113.1">
    <property type="nucleotide sequence ID" value="NC_008044.1"/>
</dbReference>
<dbReference type="SMR" id="Q1GCT5"/>
<dbReference type="STRING" id="292414.TM1040_2799"/>
<dbReference type="KEGG" id="sit:TM1040_2799"/>
<dbReference type="eggNOG" id="COG1001">
    <property type="taxonomic scope" value="Bacteria"/>
</dbReference>
<dbReference type="HOGENOM" id="CLU_027935_0_0_5"/>
<dbReference type="OrthoDB" id="9775607at2"/>
<dbReference type="Proteomes" id="UP000000636">
    <property type="component" value="Chromosome"/>
</dbReference>
<dbReference type="GO" id="GO:0000034">
    <property type="term" value="F:adenine deaminase activity"/>
    <property type="evidence" value="ECO:0007669"/>
    <property type="project" value="UniProtKB-UniRule"/>
</dbReference>
<dbReference type="GO" id="GO:0006146">
    <property type="term" value="P:adenine catabolic process"/>
    <property type="evidence" value="ECO:0007669"/>
    <property type="project" value="InterPro"/>
</dbReference>
<dbReference type="CDD" id="cd01295">
    <property type="entry name" value="AdeC"/>
    <property type="match status" value="1"/>
</dbReference>
<dbReference type="Gene3D" id="3.20.20.140">
    <property type="entry name" value="Metal-dependent hydrolases"/>
    <property type="match status" value="1"/>
</dbReference>
<dbReference type="Gene3D" id="2.30.40.10">
    <property type="entry name" value="Urease, subunit C, domain 1"/>
    <property type="match status" value="1"/>
</dbReference>
<dbReference type="HAMAP" id="MF_01518">
    <property type="entry name" value="Adenine_deamin"/>
    <property type="match status" value="1"/>
</dbReference>
<dbReference type="InterPro" id="IPR006679">
    <property type="entry name" value="Adenine_deam"/>
</dbReference>
<dbReference type="InterPro" id="IPR026912">
    <property type="entry name" value="Adenine_deam_C"/>
</dbReference>
<dbReference type="InterPro" id="IPR006680">
    <property type="entry name" value="Amidohydro-rel"/>
</dbReference>
<dbReference type="InterPro" id="IPR011059">
    <property type="entry name" value="Metal-dep_hydrolase_composite"/>
</dbReference>
<dbReference type="InterPro" id="IPR032466">
    <property type="entry name" value="Metal_Hydrolase"/>
</dbReference>
<dbReference type="NCBIfam" id="TIGR01178">
    <property type="entry name" value="ade"/>
    <property type="match status" value="1"/>
</dbReference>
<dbReference type="PANTHER" id="PTHR11113:SF2">
    <property type="entry name" value="ADENINE DEAMINASE"/>
    <property type="match status" value="1"/>
</dbReference>
<dbReference type="PANTHER" id="PTHR11113">
    <property type="entry name" value="N-ACETYLGLUCOSAMINE-6-PHOSPHATE DEACETYLASE"/>
    <property type="match status" value="1"/>
</dbReference>
<dbReference type="Pfam" id="PF13382">
    <property type="entry name" value="Adenine_deam_C"/>
    <property type="match status" value="1"/>
</dbReference>
<dbReference type="Pfam" id="PF01979">
    <property type="entry name" value="Amidohydro_1"/>
    <property type="match status" value="1"/>
</dbReference>
<dbReference type="SUPFAM" id="SSF51338">
    <property type="entry name" value="Composite domain of metallo-dependent hydrolases"/>
    <property type="match status" value="1"/>
</dbReference>
<dbReference type="SUPFAM" id="SSF51556">
    <property type="entry name" value="Metallo-dependent hydrolases"/>
    <property type="match status" value="1"/>
</dbReference>
<protein>
    <recommendedName>
        <fullName evidence="1">Adenine deaminase</fullName>
        <shortName evidence="1">Adenase</shortName>
        <shortName evidence="1">Adenine aminase</shortName>
        <ecNumber evidence="1">3.5.4.2</ecNumber>
    </recommendedName>
</protein>
<feature type="chain" id="PRO_0000292400" description="Adenine deaminase">
    <location>
        <begin position="1"/>
        <end position="601"/>
    </location>
</feature>
<name>ADEC_RUEST</name>
<evidence type="ECO:0000255" key="1">
    <source>
        <dbReference type="HAMAP-Rule" id="MF_01518"/>
    </source>
</evidence>
<comment type="catalytic activity">
    <reaction evidence="1">
        <text>adenine + H2O + H(+) = hypoxanthine + NH4(+)</text>
        <dbReference type="Rhea" id="RHEA:23688"/>
        <dbReference type="ChEBI" id="CHEBI:15377"/>
        <dbReference type="ChEBI" id="CHEBI:15378"/>
        <dbReference type="ChEBI" id="CHEBI:16708"/>
        <dbReference type="ChEBI" id="CHEBI:17368"/>
        <dbReference type="ChEBI" id="CHEBI:28938"/>
        <dbReference type="EC" id="3.5.4.2"/>
    </reaction>
</comment>
<comment type="cofactor">
    <cofactor evidence="1">
        <name>Mn(2+)</name>
        <dbReference type="ChEBI" id="CHEBI:29035"/>
    </cofactor>
</comment>
<comment type="similarity">
    <text evidence="1">Belongs to the metallo-dependent hydrolases superfamily. Adenine deaminase family.</text>
</comment>